<proteinExistence type="inferred from homology"/>
<accession>Q2NIY1</accession>
<sequence length="330" mass="36837">MKNLKFIKPFFVEEIDENPISGKFTIKPLERGYGITVGNALRRVLLSSLPGAAIVNVKIQGVEQEFTTIPGVYEDVMTIILNLKKIVFAVDDESDDFEEKLELIAKGPQRLTAASFELPAGVKIINPDHYITTLSDDVCFHMTVTIKKGIGYVGAKENKVHIENQVGVIAIDSLFTPVVNVSYQVEKKLGNKDELTIEITTNGALLAKEALATAASILVDHFNVLVELSQKPAHVEFVSESKKEAHNYVLDLEIEQLDLSVRLFNSLKRAGIDTVASLVKLSEKEVVKLKSLGRKSFQELKDKFLEYGLEFNDYLKEALHHSVEEDKDKH</sequence>
<gene>
    <name evidence="1" type="primary">rpoA</name>
    <name type="ordered locus">AYWB_495</name>
</gene>
<evidence type="ECO:0000255" key="1">
    <source>
        <dbReference type="HAMAP-Rule" id="MF_00059"/>
    </source>
</evidence>
<name>RPOA_AYWBP</name>
<organism>
    <name type="scientific">Aster yellows witches'-broom phytoplasma (strain AYWB)</name>
    <dbReference type="NCBI Taxonomy" id="322098"/>
    <lineage>
        <taxon>Bacteria</taxon>
        <taxon>Bacillati</taxon>
        <taxon>Mycoplasmatota</taxon>
        <taxon>Mollicutes</taxon>
        <taxon>Acholeplasmatales</taxon>
        <taxon>Acholeplasmataceae</taxon>
        <taxon>Candidatus Phytoplasma</taxon>
        <taxon>16SrI (Aster yellows group)</taxon>
    </lineage>
</organism>
<feature type="chain" id="PRO_0000264482" description="DNA-directed RNA polymerase subunit alpha">
    <location>
        <begin position="1"/>
        <end position="330"/>
    </location>
</feature>
<feature type="region of interest" description="Alpha N-terminal domain (alpha-NTD)" evidence="1">
    <location>
        <begin position="1"/>
        <end position="229"/>
    </location>
</feature>
<feature type="region of interest" description="Alpha C-terminal domain (alpha-CTD)" evidence="1">
    <location>
        <begin position="245"/>
        <end position="330"/>
    </location>
</feature>
<protein>
    <recommendedName>
        <fullName evidence="1">DNA-directed RNA polymerase subunit alpha</fullName>
        <shortName evidence="1">RNAP subunit alpha</shortName>
        <ecNumber evidence="1">2.7.7.6</ecNumber>
    </recommendedName>
    <alternativeName>
        <fullName evidence="1">RNA polymerase subunit alpha</fullName>
    </alternativeName>
    <alternativeName>
        <fullName evidence="1">Transcriptase subunit alpha</fullName>
    </alternativeName>
</protein>
<reference key="1">
    <citation type="journal article" date="2006" name="J. Bacteriol.">
        <title>Living with genome instability: the adaptation of phytoplasmas to diverse environments of their insect and plant hosts.</title>
        <authorList>
            <person name="Bai X."/>
            <person name="Zhang J."/>
            <person name="Ewing A."/>
            <person name="Miller S.A."/>
            <person name="Jancso Radek A."/>
            <person name="Shevchenko D.V."/>
            <person name="Tsukerman K."/>
            <person name="Walunas T."/>
            <person name="Lapidus A."/>
            <person name="Campbell J.W."/>
            <person name="Hogenhout S.A."/>
        </authorList>
    </citation>
    <scope>NUCLEOTIDE SEQUENCE [LARGE SCALE GENOMIC DNA]</scope>
    <source>
        <strain>AYWB</strain>
    </source>
</reference>
<keyword id="KW-0240">DNA-directed RNA polymerase</keyword>
<keyword id="KW-0548">Nucleotidyltransferase</keyword>
<keyword id="KW-0804">Transcription</keyword>
<keyword id="KW-0808">Transferase</keyword>
<dbReference type="EC" id="2.7.7.6" evidence="1"/>
<dbReference type="EMBL" id="CP000061">
    <property type="protein sequence ID" value="ABC65612.1"/>
    <property type="molecule type" value="Genomic_DNA"/>
</dbReference>
<dbReference type="RefSeq" id="WP_011412775.1">
    <property type="nucleotide sequence ID" value="NC_007716.1"/>
</dbReference>
<dbReference type="SMR" id="Q2NIY1"/>
<dbReference type="STRING" id="322098.AYWB_495"/>
<dbReference type="KEGG" id="ayw:AYWB_495"/>
<dbReference type="eggNOG" id="COG0202">
    <property type="taxonomic scope" value="Bacteria"/>
</dbReference>
<dbReference type="HOGENOM" id="CLU_053084_0_1_14"/>
<dbReference type="OrthoDB" id="9805706at2"/>
<dbReference type="PhylomeDB" id="Q2NIY1"/>
<dbReference type="Proteomes" id="UP000001934">
    <property type="component" value="Chromosome"/>
</dbReference>
<dbReference type="GO" id="GO:0005737">
    <property type="term" value="C:cytoplasm"/>
    <property type="evidence" value="ECO:0007669"/>
    <property type="project" value="UniProtKB-ARBA"/>
</dbReference>
<dbReference type="GO" id="GO:0000428">
    <property type="term" value="C:DNA-directed RNA polymerase complex"/>
    <property type="evidence" value="ECO:0007669"/>
    <property type="project" value="UniProtKB-KW"/>
</dbReference>
<dbReference type="GO" id="GO:0003677">
    <property type="term" value="F:DNA binding"/>
    <property type="evidence" value="ECO:0007669"/>
    <property type="project" value="UniProtKB-UniRule"/>
</dbReference>
<dbReference type="GO" id="GO:0003899">
    <property type="term" value="F:DNA-directed RNA polymerase activity"/>
    <property type="evidence" value="ECO:0007669"/>
    <property type="project" value="UniProtKB-UniRule"/>
</dbReference>
<dbReference type="GO" id="GO:0046983">
    <property type="term" value="F:protein dimerization activity"/>
    <property type="evidence" value="ECO:0007669"/>
    <property type="project" value="InterPro"/>
</dbReference>
<dbReference type="GO" id="GO:0006351">
    <property type="term" value="P:DNA-templated transcription"/>
    <property type="evidence" value="ECO:0007669"/>
    <property type="project" value="UniProtKB-UniRule"/>
</dbReference>
<dbReference type="CDD" id="cd06928">
    <property type="entry name" value="RNAP_alpha_NTD"/>
    <property type="match status" value="1"/>
</dbReference>
<dbReference type="FunFam" id="2.170.120.12:FF:000001">
    <property type="entry name" value="DNA-directed RNA polymerase subunit alpha"/>
    <property type="match status" value="1"/>
</dbReference>
<dbReference type="Gene3D" id="1.10.150.20">
    <property type="entry name" value="5' to 3' exonuclease, C-terminal subdomain"/>
    <property type="match status" value="1"/>
</dbReference>
<dbReference type="Gene3D" id="2.170.120.12">
    <property type="entry name" value="DNA-directed RNA polymerase, insert domain"/>
    <property type="match status" value="1"/>
</dbReference>
<dbReference type="Gene3D" id="3.30.1360.10">
    <property type="entry name" value="RNA polymerase, RBP11-like subunit"/>
    <property type="match status" value="1"/>
</dbReference>
<dbReference type="HAMAP" id="MF_00059">
    <property type="entry name" value="RNApol_bact_RpoA"/>
    <property type="match status" value="1"/>
</dbReference>
<dbReference type="InterPro" id="IPR011262">
    <property type="entry name" value="DNA-dir_RNA_pol_insert"/>
</dbReference>
<dbReference type="InterPro" id="IPR011263">
    <property type="entry name" value="DNA-dir_RNA_pol_RpoA/D/Rpb3"/>
</dbReference>
<dbReference type="InterPro" id="IPR011773">
    <property type="entry name" value="DNA-dir_RpoA"/>
</dbReference>
<dbReference type="InterPro" id="IPR036603">
    <property type="entry name" value="RBP11-like"/>
</dbReference>
<dbReference type="InterPro" id="IPR011260">
    <property type="entry name" value="RNAP_asu_C"/>
</dbReference>
<dbReference type="InterPro" id="IPR036643">
    <property type="entry name" value="RNApol_insert_sf"/>
</dbReference>
<dbReference type="NCBIfam" id="NF003519">
    <property type="entry name" value="PRK05182.2-5"/>
    <property type="match status" value="1"/>
</dbReference>
<dbReference type="NCBIfam" id="TIGR02027">
    <property type="entry name" value="rpoA"/>
    <property type="match status" value="1"/>
</dbReference>
<dbReference type="Pfam" id="PF01000">
    <property type="entry name" value="RNA_pol_A_bac"/>
    <property type="match status" value="1"/>
</dbReference>
<dbReference type="Pfam" id="PF03118">
    <property type="entry name" value="RNA_pol_A_CTD"/>
    <property type="match status" value="1"/>
</dbReference>
<dbReference type="Pfam" id="PF01193">
    <property type="entry name" value="RNA_pol_L"/>
    <property type="match status" value="1"/>
</dbReference>
<dbReference type="SMART" id="SM00662">
    <property type="entry name" value="RPOLD"/>
    <property type="match status" value="1"/>
</dbReference>
<dbReference type="SUPFAM" id="SSF47789">
    <property type="entry name" value="C-terminal domain of RNA polymerase alpha subunit"/>
    <property type="match status" value="1"/>
</dbReference>
<dbReference type="SUPFAM" id="SSF56553">
    <property type="entry name" value="Insert subdomain of RNA polymerase alpha subunit"/>
    <property type="match status" value="1"/>
</dbReference>
<dbReference type="SUPFAM" id="SSF55257">
    <property type="entry name" value="RBP11-like subunits of RNA polymerase"/>
    <property type="match status" value="1"/>
</dbReference>
<comment type="function">
    <text evidence="1">DNA-dependent RNA polymerase catalyzes the transcription of DNA into RNA using the four ribonucleoside triphosphates as substrates.</text>
</comment>
<comment type="catalytic activity">
    <reaction evidence="1">
        <text>RNA(n) + a ribonucleoside 5'-triphosphate = RNA(n+1) + diphosphate</text>
        <dbReference type="Rhea" id="RHEA:21248"/>
        <dbReference type="Rhea" id="RHEA-COMP:14527"/>
        <dbReference type="Rhea" id="RHEA-COMP:17342"/>
        <dbReference type="ChEBI" id="CHEBI:33019"/>
        <dbReference type="ChEBI" id="CHEBI:61557"/>
        <dbReference type="ChEBI" id="CHEBI:140395"/>
        <dbReference type="EC" id="2.7.7.6"/>
    </reaction>
</comment>
<comment type="subunit">
    <text evidence="1">Homodimer. The RNAP catalytic core consists of 2 alpha, 1 beta, 1 beta' and 1 omega subunit. When a sigma factor is associated with the core the holoenzyme is formed, which can initiate transcription.</text>
</comment>
<comment type="domain">
    <text evidence="1">The N-terminal domain is essential for RNAP assembly and basal transcription, whereas the C-terminal domain is involved in interaction with transcriptional regulators and with upstream promoter elements.</text>
</comment>
<comment type="similarity">
    <text evidence="1">Belongs to the RNA polymerase alpha chain family.</text>
</comment>